<organism>
    <name type="scientific">Limosilactobacillus reuteri (strain DSM 20016)</name>
    <name type="common">Lactobacillus reuteri</name>
    <dbReference type="NCBI Taxonomy" id="557436"/>
    <lineage>
        <taxon>Bacteria</taxon>
        <taxon>Bacillati</taxon>
        <taxon>Bacillota</taxon>
        <taxon>Bacilli</taxon>
        <taxon>Lactobacillales</taxon>
        <taxon>Lactobacillaceae</taxon>
        <taxon>Limosilactobacillus</taxon>
    </lineage>
</organism>
<feature type="chain" id="PRO_1000063671" description="UPF0213 protein Lreu_0682">
    <location>
        <begin position="1"/>
        <end position="96"/>
    </location>
</feature>
<feature type="domain" description="GIY-YIG" evidence="1">
    <location>
        <begin position="4"/>
        <end position="81"/>
    </location>
</feature>
<keyword id="KW-1185">Reference proteome</keyword>
<sequence length="96" mass="11762">MASEKYYIYVLYCADNSFYCGFTNNVKRRFHTHQTYQGAKYTRVKKRHPLKLIYSEEFESKHDALSAEYYFKHQTRRQKEKFLLDHGVDLLKLRRN</sequence>
<name>Y682_LIMRD</name>
<dbReference type="EMBL" id="CP000705">
    <property type="protein sequence ID" value="ABQ82947.1"/>
    <property type="molecule type" value="Genomic_DNA"/>
</dbReference>
<dbReference type="RefSeq" id="WP_003668197.1">
    <property type="nucleotide sequence ID" value="NZ_AZDD01000002.1"/>
</dbReference>
<dbReference type="SMR" id="A5VJC3"/>
<dbReference type="STRING" id="557436.Lreu_0682"/>
<dbReference type="KEGG" id="lre:Lreu_0682"/>
<dbReference type="eggNOG" id="COG2827">
    <property type="taxonomic scope" value="Bacteria"/>
</dbReference>
<dbReference type="HOGENOM" id="CLU_135650_0_3_9"/>
<dbReference type="Proteomes" id="UP000001991">
    <property type="component" value="Chromosome"/>
</dbReference>
<dbReference type="CDD" id="cd10456">
    <property type="entry name" value="GIY-YIG_UPF0213"/>
    <property type="match status" value="1"/>
</dbReference>
<dbReference type="Gene3D" id="3.40.1440.10">
    <property type="entry name" value="GIY-YIG endonuclease"/>
    <property type="match status" value="1"/>
</dbReference>
<dbReference type="InterPro" id="IPR000305">
    <property type="entry name" value="GIY-YIG_endonuc"/>
</dbReference>
<dbReference type="InterPro" id="IPR035901">
    <property type="entry name" value="GIY-YIG_endonuc_sf"/>
</dbReference>
<dbReference type="InterPro" id="IPR050190">
    <property type="entry name" value="UPF0213_domain"/>
</dbReference>
<dbReference type="PANTHER" id="PTHR34477">
    <property type="entry name" value="UPF0213 PROTEIN YHBQ"/>
    <property type="match status" value="1"/>
</dbReference>
<dbReference type="PANTHER" id="PTHR34477:SF1">
    <property type="entry name" value="UPF0213 PROTEIN YHBQ"/>
    <property type="match status" value="1"/>
</dbReference>
<dbReference type="Pfam" id="PF01541">
    <property type="entry name" value="GIY-YIG"/>
    <property type="match status" value="1"/>
</dbReference>
<dbReference type="SMART" id="SM00465">
    <property type="entry name" value="GIYc"/>
    <property type="match status" value="1"/>
</dbReference>
<dbReference type="SUPFAM" id="SSF82771">
    <property type="entry name" value="GIY-YIG endonuclease"/>
    <property type="match status" value="1"/>
</dbReference>
<dbReference type="PROSITE" id="PS50164">
    <property type="entry name" value="GIY_YIG"/>
    <property type="match status" value="1"/>
</dbReference>
<protein>
    <recommendedName>
        <fullName>UPF0213 protein Lreu_0682</fullName>
    </recommendedName>
</protein>
<evidence type="ECO:0000255" key="1">
    <source>
        <dbReference type="PROSITE-ProRule" id="PRU00977"/>
    </source>
</evidence>
<evidence type="ECO:0000305" key="2"/>
<reference key="1">
    <citation type="journal article" date="2011" name="PLoS Genet.">
        <title>The evolution of host specialization in the vertebrate gut symbiont Lactobacillus reuteri.</title>
        <authorList>
            <person name="Frese S.A."/>
            <person name="Benson A.K."/>
            <person name="Tannock G.W."/>
            <person name="Loach D.M."/>
            <person name="Kim J."/>
            <person name="Zhang M."/>
            <person name="Oh P.L."/>
            <person name="Heng N.C."/>
            <person name="Patil P.B."/>
            <person name="Juge N."/>
            <person name="Mackenzie D.A."/>
            <person name="Pearson B.M."/>
            <person name="Lapidus A."/>
            <person name="Dalin E."/>
            <person name="Tice H."/>
            <person name="Goltsman E."/>
            <person name="Land M."/>
            <person name="Hauser L."/>
            <person name="Ivanova N."/>
            <person name="Kyrpides N.C."/>
            <person name="Walter J."/>
        </authorList>
    </citation>
    <scope>NUCLEOTIDE SEQUENCE [LARGE SCALE GENOMIC DNA]</scope>
    <source>
        <strain>DSM 20016</strain>
    </source>
</reference>
<gene>
    <name type="ordered locus">Lreu_0682</name>
</gene>
<proteinExistence type="inferred from homology"/>
<accession>A5VJC3</accession>
<comment type="similarity">
    <text evidence="2">Belongs to the UPF0213 family.</text>
</comment>